<evidence type="ECO:0000250" key="1">
    <source>
        <dbReference type="UniProtKB" id="Q04868"/>
    </source>
</evidence>
<evidence type="ECO:0000269" key="2">
    <source>
    </source>
</evidence>
<evidence type="ECO:0000269" key="3">
    <source>
    </source>
</evidence>
<evidence type="ECO:0000303" key="4">
    <source>
    </source>
</evidence>
<evidence type="ECO:0000303" key="5">
    <source>
    </source>
</evidence>
<evidence type="ECO:0000305" key="6"/>
<evidence type="ECO:0000305" key="7">
    <source>
    </source>
</evidence>
<evidence type="ECO:0000312" key="8">
    <source>
        <dbReference type="PomBase" id="SPBC3H7.10"/>
    </source>
</evidence>
<dbReference type="EMBL" id="CU329671">
    <property type="protein sequence ID" value="CAA20306.1"/>
    <property type="molecule type" value="Genomic_DNA"/>
</dbReference>
<dbReference type="PIR" id="T40405">
    <property type="entry name" value="T40405"/>
</dbReference>
<dbReference type="RefSeq" id="NP_595765.1">
    <property type="nucleotide sequence ID" value="NM_001021666.2"/>
</dbReference>
<dbReference type="SMR" id="O74385"/>
<dbReference type="BioGRID" id="277495">
    <property type="interactions" value="90"/>
</dbReference>
<dbReference type="ComplexPortal" id="CPX-25728">
    <property type="entry name" value="Elongator holoenzyme complex"/>
</dbReference>
<dbReference type="FunCoup" id="O74385">
    <property type="interactions" value="1"/>
</dbReference>
<dbReference type="STRING" id="284812.O74385"/>
<dbReference type="PaxDb" id="4896-SPBC3H7.10.1"/>
<dbReference type="EnsemblFungi" id="SPBC3H7.10.1">
    <property type="protein sequence ID" value="SPBC3H7.10.1:pep"/>
    <property type="gene ID" value="SPBC3H7.10"/>
</dbReference>
<dbReference type="GeneID" id="2540979"/>
<dbReference type="KEGG" id="spo:2540979"/>
<dbReference type="PomBase" id="SPBC3H7.10">
    <property type="gene designation" value="elp6"/>
</dbReference>
<dbReference type="VEuPathDB" id="FungiDB:SPBC3H7.10"/>
<dbReference type="eggNOG" id="KOG4723">
    <property type="taxonomic scope" value="Eukaryota"/>
</dbReference>
<dbReference type="HOGENOM" id="CLU_1129634_0_0_1"/>
<dbReference type="InParanoid" id="O74385"/>
<dbReference type="OMA" id="CISCRPL"/>
<dbReference type="UniPathway" id="UPA00988"/>
<dbReference type="PRO" id="PR:O74385"/>
<dbReference type="Proteomes" id="UP000002485">
    <property type="component" value="Chromosome II"/>
</dbReference>
<dbReference type="GO" id="GO:0005829">
    <property type="term" value="C:cytosol"/>
    <property type="evidence" value="ECO:0007005"/>
    <property type="project" value="PomBase"/>
</dbReference>
<dbReference type="GO" id="GO:0033588">
    <property type="term" value="C:elongator holoenzyme complex"/>
    <property type="evidence" value="ECO:0000318"/>
    <property type="project" value="GO_Central"/>
</dbReference>
<dbReference type="GO" id="GO:0005634">
    <property type="term" value="C:nucleus"/>
    <property type="evidence" value="ECO:0007005"/>
    <property type="project" value="PomBase"/>
</dbReference>
<dbReference type="GO" id="GO:0140018">
    <property type="term" value="P:regulation of cytoplasmic translational fidelity"/>
    <property type="evidence" value="ECO:0000315"/>
    <property type="project" value="PomBase"/>
</dbReference>
<dbReference type="GO" id="GO:0002926">
    <property type="term" value="P:tRNA wobble base 5-methoxycarbonylmethyl-2-thiouridinylation"/>
    <property type="evidence" value="ECO:0000316"/>
    <property type="project" value="PomBase"/>
</dbReference>
<dbReference type="CDD" id="cd19495">
    <property type="entry name" value="Elp6"/>
    <property type="match status" value="1"/>
</dbReference>
<dbReference type="Gene3D" id="3.40.50.300">
    <property type="entry name" value="P-loop containing nucleotide triphosphate hydrolases"/>
    <property type="match status" value="1"/>
</dbReference>
<dbReference type="InterPro" id="IPR018627">
    <property type="entry name" value="ELP6"/>
</dbReference>
<dbReference type="InterPro" id="IPR027417">
    <property type="entry name" value="P-loop_NTPase"/>
</dbReference>
<dbReference type="PANTHER" id="PTHR16184">
    <property type="entry name" value="ELONGATOR COMPLEX PROTEIN 6"/>
    <property type="match status" value="1"/>
</dbReference>
<dbReference type="PANTHER" id="PTHR16184:SF6">
    <property type="entry name" value="ELONGATOR COMPLEX PROTEIN 6"/>
    <property type="match status" value="1"/>
</dbReference>
<dbReference type="Pfam" id="PF09807">
    <property type="entry name" value="ELP6"/>
    <property type="match status" value="1"/>
</dbReference>
<gene>
    <name evidence="4 8" type="primary">elp6</name>
    <name type="ORF">SPBC3H7.10</name>
</gene>
<keyword id="KW-0963">Cytoplasm</keyword>
<keyword id="KW-0539">Nucleus</keyword>
<keyword id="KW-1185">Reference proteome</keyword>
<keyword id="KW-0819">tRNA processing</keyword>
<organism>
    <name type="scientific">Schizosaccharomyces pombe (strain 972 / ATCC 24843)</name>
    <name type="common">Fission yeast</name>
    <dbReference type="NCBI Taxonomy" id="284812"/>
    <lineage>
        <taxon>Eukaryota</taxon>
        <taxon>Fungi</taxon>
        <taxon>Dikarya</taxon>
        <taxon>Ascomycota</taxon>
        <taxon>Taphrinomycotina</taxon>
        <taxon>Schizosaccharomycetes</taxon>
        <taxon>Schizosaccharomycetales</taxon>
        <taxon>Schizosaccharomycetaceae</taxon>
        <taxon>Schizosaccharomyces</taxon>
    </lineage>
</organism>
<name>ELP6_SCHPO</name>
<reference key="1">
    <citation type="journal article" date="2002" name="Nature">
        <title>The genome sequence of Schizosaccharomyces pombe.</title>
        <authorList>
            <person name="Wood V."/>
            <person name="Gwilliam R."/>
            <person name="Rajandream M.A."/>
            <person name="Lyne M.H."/>
            <person name="Lyne R."/>
            <person name="Stewart A."/>
            <person name="Sgouros J.G."/>
            <person name="Peat N."/>
            <person name="Hayles J."/>
            <person name="Baker S.G."/>
            <person name="Basham D."/>
            <person name="Bowman S."/>
            <person name="Brooks K."/>
            <person name="Brown D."/>
            <person name="Brown S."/>
            <person name="Chillingworth T."/>
            <person name="Churcher C.M."/>
            <person name="Collins M."/>
            <person name="Connor R."/>
            <person name="Cronin A."/>
            <person name="Davis P."/>
            <person name="Feltwell T."/>
            <person name="Fraser A."/>
            <person name="Gentles S."/>
            <person name="Goble A."/>
            <person name="Hamlin N."/>
            <person name="Harris D.E."/>
            <person name="Hidalgo J."/>
            <person name="Hodgson G."/>
            <person name="Holroyd S."/>
            <person name="Hornsby T."/>
            <person name="Howarth S."/>
            <person name="Huckle E.J."/>
            <person name="Hunt S."/>
            <person name="Jagels K."/>
            <person name="James K.D."/>
            <person name="Jones L."/>
            <person name="Jones M."/>
            <person name="Leather S."/>
            <person name="McDonald S."/>
            <person name="McLean J."/>
            <person name="Mooney P."/>
            <person name="Moule S."/>
            <person name="Mungall K.L."/>
            <person name="Murphy L.D."/>
            <person name="Niblett D."/>
            <person name="Odell C."/>
            <person name="Oliver K."/>
            <person name="O'Neil S."/>
            <person name="Pearson D."/>
            <person name="Quail M.A."/>
            <person name="Rabbinowitsch E."/>
            <person name="Rutherford K.M."/>
            <person name="Rutter S."/>
            <person name="Saunders D."/>
            <person name="Seeger K."/>
            <person name="Sharp S."/>
            <person name="Skelton J."/>
            <person name="Simmonds M.N."/>
            <person name="Squares R."/>
            <person name="Squares S."/>
            <person name="Stevens K."/>
            <person name="Taylor K."/>
            <person name="Taylor R.G."/>
            <person name="Tivey A."/>
            <person name="Walsh S.V."/>
            <person name="Warren T."/>
            <person name="Whitehead S."/>
            <person name="Woodward J.R."/>
            <person name="Volckaert G."/>
            <person name="Aert R."/>
            <person name="Robben J."/>
            <person name="Grymonprez B."/>
            <person name="Weltjens I."/>
            <person name="Vanstreels E."/>
            <person name="Rieger M."/>
            <person name="Schaefer M."/>
            <person name="Mueller-Auer S."/>
            <person name="Gabel C."/>
            <person name="Fuchs M."/>
            <person name="Duesterhoeft A."/>
            <person name="Fritzc C."/>
            <person name="Holzer E."/>
            <person name="Moestl D."/>
            <person name="Hilbert H."/>
            <person name="Borzym K."/>
            <person name="Langer I."/>
            <person name="Beck A."/>
            <person name="Lehrach H."/>
            <person name="Reinhardt R."/>
            <person name="Pohl T.M."/>
            <person name="Eger P."/>
            <person name="Zimmermann W."/>
            <person name="Wedler H."/>
            <person name="Wambutt R."/>
            <person name="Purnelle B."/>
            <person name="Goffeau A."/>
            <person name="Cadieu E."/>
            <person name="Dreano S."/>
            <person name="Gloux S."/>
            <person name="Lelaure V."/>
            <person name="Mottier S."/>
            <person name="Galibert F."/>
            <person name="Aves S.J."/>
            <person name="Xiang Z."/>
            <person name="Hunt C."/>
            <person name="Moore K."/>
            <person name="Hurst S.M."/>
            <person name="Lucas M."/>
            <person name="Rochet M."/>
            <person name="Gaillardin C."/>
            <person name="Tallada V.A."/>
            <person name="Garzon A."/>
            <person name="Thode G."/>
            <person name="Daga R.R."/>
            <person name="Cruzado L."/>
            <person name="Jimenez J."/>
            <person name="Sanchez M."/>
            <person name="del Rey F."/>
            <person name="Benito J."/>
            <person name="Dominguez A."/>
            <person name="Revuelta J.L."/>
            <person name="Moreno S."/>
            <person name="Armstrong J."/>
            <person name="Forsburg S.L."/>
            <person name="Cerutti L."/>
            <person name="Lowe T."/>
            <person name="McCombie W.R."/>
            <person name="Paulsen I."/>
            <person name="Potashkin J."/>
            <person name="Shpakovski G.V."/>
            <person name="Ussery D."/>
            <person name="Barrell B.G."/>
            <person name="Nurse P."/>
        </authorList>
    </citation>
    <scope>NUCLEOTIDE SEQUENCE [LARGE SCALE GENOMIC DNA]</scope>
    <source>
        <strain>972 / ATCC 24843</strain>
    </source>
</reference>
<reference key="2">
    <citation type="journal article" date="2006" name="Nat. Biotechnol.">
        <title>ORFeome cloning and global analysis of protein localization in the fission yeast Schizosaccharomyces pombe.</title>
        <authorList>
            <person name="Matsuyama A."/>
            <person name="Arai R."/>
            <person name="Yashiroda Y."/>
            <person name="Shirai A."/>
            <person name="Kamata A."/>
            <person name="Sekido S."/>
            <person name="Kobayashi Y."/>
            <person name="Hashimoto A."/>
            <person name="Hamamoto M."/>
            <person name="Hiraoka Y."/>
            <person name="Horinouchi S."/>
            <person name="Yoshida M."/>
        </authorList>
    </citation>
    <scope>SUBCELLULAR LOCATION [LARGE SCALE ANALYSIS]</scope>
</reference>
<reference key="3">
    <citation type="journal article" date="2012" name="Cell Rep.">
        <title>Translational control of cell division by Elongator.</title>
        <authorList>
            <person name="Bauer F."/>
            <person name="Matsuyama A."/>
            <person name="Candiracci J."/>
            <person name="Dieu M."/>
            <person name="Scheliga J."/>
            <person name="Wolf D.A."/>
            <person name="Yoshida M."/>
            <person name="Hermand D."/>
        </authorList>
    </citation>
    <scope>FUNCTION</scope>
    <scope>PATHWAY</scope>
</reference>
<reference key="4">
    <citation type="journal article" date="2018" name="Cell. Mol. Life Sci.">
        <title>Structural insights into the function of Elongator.</title>
        <authorList>
            <person name="Dalwadi U."/>
            <person name="Yip C.K."/>
        </authorList>
    </citation>
    <scope>REVIEW</scope>
</reference>
<protein>
    <recommendedName>
        <fullName>Elongator complex protein 6 homolog</fullName>
    </recommendedName>
</protein>
<sequence>MSSLHEHLRPIPEPFSLTLLLGTRETPVTFLFHYYLYHALKAKESTCFLTFSKTLDEHAISMRKWGMDIKTKKNFFFIDGFSMLFAPISKPSKVQAPETKNHIKSVFAPVIQCVEENDFEFENSTIIIEDIDILQSTHALDSTKIQQAILELRKCFSRVIVNVTLGAPLPQQKSLGSSIGHMATRCISCRPLTSGSARRITGFLRLSRMPNHFRSGICETPEDDDKELLYEVTEAGAKVYSKGQVTLQL</sequence>
<feature type="chain" id="PRO_0000351069" description="Elongator complex protein 6 homolog">
    <location>
        <begin position="1"/>
        <end position="249"/>
    </location>
</feature>
<proteinExistence type="inferred from homology"/>
<comment type="function">
    <text evidence="1 3 5">Component of the elongator complex which is required for multiple tRNA modifications, including mcm5U (5-methoxycarbonylmethyl uridine), mcm5s2U (5-methoxycarbonylmethyl-2-thiouridine), and ncm5U (5-carbamoylmethyl uridine) (PubMed:22768388). The elongator complex catalyzes formation of carboxymethyluridine in the wobble base at position 34 in tRNAs (PubMed:29332244).</text>
</comment>
<comment type="pathway">
    <text evidence="3">tRNA modification; 5-methoxycarbonylmethyl-2-thiouridine-tRNA biosynthesis.</text>
</comment>
<comment type="subunit">
    <text evidence="1">Component of the elongator complex.</text>
</comment>
<comment type="subcellular location">
    <subcellularLocation>
        <location evidence="2">Cytoplasm</location>
    </subcellularLocation>
    <subcellularLocation>
        <location evidence="2">Nucleus</location>
    </subcellularLocation>
</comment>
<comment type="similarity">
    <text evidence="6">Belongs to the ELP6 family.</text>
</comment>
<comment type="caution">
    <text evidence="7">The elongator complex was originally thought to play a role in transcription elongation. However, it is no longer thought to play a direct role in this process and its primary function is thought to be in tRNA modification.</text>
</comment>
<accession>O74385</accession>